<protein>
    <recommendedName>
        <fullName>Maleylacetate reductase</fullName>
        <ecNumber>1.3.1.32</ecNumber>
    </recommendedName>
</protein>
<keyword id="KW-0058">Aromatic hydrocarbons catabolism</keyword>
<keyword id="KW-0520">NAD</keyword>
<keyword id="KW-0560">Oxidoreductase</keyword>
<organism>
    <name type="scientific">Pseudomonas aeruginosa</name>
    <dbReference type="NCBI Taxonomy" id="287"/>
    <lineage>
        <taxon>Bacteria</taxon>
        <taxon>Pseudomonadati</taxon>
        <taxon>Pseudomonadota</taxon>
        <taxon>Gammaproteobacteria</taxon>
        <taxon>Pseudomonadales</taxon>
        <taxon>Pseudomonadaceae</taxon>
        <taxon>Pseudomonas</taxon>
    </lineage>
</organism>
<evidence type="ECO:0000305" key="1"/>
<name>CLCE_PSEAI</name>
<dbReference type="EC" id="1.3.1.32"/>
<dbReference type="EMBL" id="AF087482">
    <property type="protein sequence ID" value="AAC69478.1"/>
    <property type="molecule type" value="Genomic_DNA"/>
</dbReference>
<dbReference type="SMR" id="O87612"/>
<dbReference type="BRENDA" id="1.3.1.32">
    <property type="organism ID" value="5087"/>
</dbReference>
<dbReference type="UniPathway" id="UPA00083"/>
<dbReference type="GO" id="GO:0004022">
    <property type="term" value="F:alcohol dehydrogenase (NAD+) activity"/>
    <property type="evidence" value="ECO:0007669"/>
    <property type="project" value="TreeGrafter"/>
</dbReference>
<dbReference type="GO" id="GO:0018506">
    <property type="term" value="F:maleylacetate reductase activity"/>
    <property type="evidence" value="ECO:0007669"/>
    <property type="project" value="UniProtKB-EC"/>
</dbReference>
<dbReference type="GO" id="GO:0046872">
    <property type="term" value="F:metal ion binding"/>
    <property type="evidence" value="ECO:0007669"/>
    <property type="project" value="InterPro"/>
</dbReference>
<dbReference type="GO" id="GO:0009056">
    <property type="term" value="P:catabolic process"/>
    <property type="evidence" value="ECO:0007669"/>
    <property type="project" value="UniProtKB-KW"/>
</dbReference>
<dbReference type="CDD" id="cd08177">
    <property type="entry name" value="MAR"/>
    <property type="match status" value="1"/>
</dbReference>
<dbReference type="FunFam" id="1.20.1090.10:FF:000010">
    <property type="entry name" value="Maleylacetate reductase 1"/>
    <property type="match status" value="1"/>
</dbReference>
<dbReference type="FunFam" id="3.40.50.1970:FF:000015">
    <property type="entry name" value="Maleylacetate reductase 1"/>
    <property type="match status" value="1"/>
</dbReference>
<dbReference type="Gene3D" id="3.40.50.1970">
    <property type="match status" value="1"/>
</dbReference>
<dbReference type="Gene3D" id="1.20.1090.10">
    <property type="entry name" value="Dehydroquinate synthase-like - alpha domain"/>
    <property type="match status" value="1"/>
</dbReference>
<dbReference type="InterPro" id="IPR001670">
    <property type="entry name" value="ADH_Fe/GldA"/>
</dbReference>
<dbReference type="InterPro" id="IPR056798">
    <property type="entry name" value="ADH_Fe_C"/>
</dbReference>
<dbReference type="InterPro" id="IPR039697">
    <property type="entry name" value="Alcohol_dehydrogenase_Fe"/>
</dbReference>
<dbReference type="InterPro" id="IPR034786">
    <property type="entry name" value="MAR"/>
</dbReference>
<dbReference type="PANTHER" id="PTHR11496">
    <property type="entry name" value="ALCOHOL DEHYDROGENASE"/>
    <property type="match status" value="1"/>
</dbReference>
<dbReference type="PANTHER" id="PTHR11496:SF102">
    <property type="entry name" value="ALCOHOL DEHYDROGENASE 4"/>
    <property type="match status" value="1"/>
</dbReference>
<dbReference type="Pfam" id="PF25137">
    <property type="entry name" value="ADH_Fe_C"/>
    <property type="match status" value="1"/>
</dbReference>
<dbReference type="Pfam" id="PF00465">
    <property type="entry name" value="Fe-ADH"/>
    <property type="match status" value="1"/>
</dbReference>
<dbReference type="SUPFAM" id="SSF56796">
    <property type="entry name" value="Dehydroquinate synthase-like"/>
    <property type="match status" value="1"/>
</dbReference>
<reference key="1">
    <citation type="journal article" date="2001" name="Appl. Environ. Microbiol.">
        <title>Cloning, nucleotide sequencing, and functional analysis of a novel, mobile cluster of biodegradation genes from Pseudomonas aeruginosa strain JB2.</title>
        <authorList>
            <person name="Hickey W.J."/>
            <person name="Sabat G."/>
            <person name="Yuroff A.S."/>
            <person name="Arment A.R."/>
            <person name="Perez-Lesher J."/>
        </authorList>
    </citation>
    <scope>NUCLEOTIDE SEQUENCE [GENOMIC DNA]</scope>
    <source>
        <strain>JB2</strain>
    </source>
</reference>
<proteinExistence type="inferred from homology"/>
<gene>
    <name type="primary">clcE</name>
</gene>
<feature type="chain" id="PRO_0000087845" description="Maleylacetate reductase">
    <location>
        <begin position="1"/>
        <end position="352"/>
    </location>
</feature>
<accession>O87612</accession>
<sequence>MNFIHDYRSPRVIFGPDSLARLPQELERLGIDRALVLTTPEQAPLGRQVAEPVIGHVAAFYDGATMHVPALVAEEACKIARTSEANGVIAIGGGSTIGLAKIVALRTELPIVAVPTTYAGSEMTSIFGITEGGVKKTGRDARVMPRAVIYEPRLTLELPLSISVTSAINAIAHAVEGLYAPDATPLLTIMAQEGIAATVRAISRMYQSPRDLQARGDALYGAWLCASVVGNVSMALHHKLCHTLGGTLDLPHAQTHTVVLPHALAYNARAVPDAMRVLRIALGHDDPPTALYELARDNGAPVALRDLGMREEDIEHVGDLALQDRYPNPRELDRDALLALLRDAYHGRPPSA</sequence>
<comment type="catalytic activity">
    <reaction>
        <text>3-oxoadipate + NAD(+) = maleylacetate + NADH + H(+)</text>
        <dbReference type="Rhea" id="RHEA:16981"/>
        <dbReference type="ChEBI" id="CHEBI:15378"/>
        <dbReference type="ChEBI" id="CHEBI:15775"/>
        <dbReference type="ChEBI" id="CHEBI:16468"/>
        <dbReference type="ChEBI" id="CHEBI:57540"/>
        <dbReference type="ChEBI" id="CHEBI:57945"/>
        <dbReference type="EC" id="1.3.1.32"/>
    </reaction>
</comment>
<comment type="catalytic activity">
    <reaction>
        <text>3-oxoadipate + NADP(+) = maleylacetate + NADPH + H(+)</text>
        <dbReference type="Rhea" id="RHEA:16985"/>
        <dbReference type="ChEBI" id="CHEBI:15378"/>
        <dbReference type="ChEBI" id="CHEBI:15775"/>
        <dbReference type="ChEBI" id="CHEBI:16468"/>
        <dbReference type="ChEBI" id="CHEBI:57783"/>
        <dbReference type="ChEBI" id="CHEBI:58349"/>
        <dbReference type="EC" id="1.3.1.32"/>
    </reaction>
</comment>
<comment type="pathway">
    <text>Aromatic compound metabolism; 3-chlorocatechol degradation.</text>
</comment>
<comment type="similarity">
    <text evidence="1">Belongs to the iron-containing alcohol dehydrogenase family.</text>
</comment>